<evidence type="ECO:0000255" key="1"/>
<evidence type="ECO:0000255" key="2">
    <source>
        <dbReference type="PROSITE-ProRule" id="PRU00159"/>
    </source>
</evidence>
<evidence type="ECO:0000305" key="3"/>
<dbReference type="EC" id="2.7.11.1"/>
<dbReference type="EMBL" id="AC012188">
    <property type="protein sequence ID" value="AAF43939.1"/>
    <property type="molecule type" value="Genomic_DNA"/>
</dbReference>
<dbReference type="EMBL" id="CP002684">
    <property type="protein sequence ID" value="AEE29157.2"/>
    <property type="molecule type" value="Genomic_DNA"/>
</dbReference>
<dbReference type="EMBL" id="FJ708634">
    <property type="protein sequence ID" value="ACN59230.1"/>
    <property type="molecule type" value="mRNA"/>
</dbReference>
<dbReference type="PIR" id="D86278">
    <property type="entry name" value="D86278"/>
</dbReference>
<dbReference type="RefSeq" id="NP_001319002.1">
    <property type="nucleotide sequence ID" value="NM_001332118.1"/>
</dbReference>
<dbReference type="SMR" id="Q9M9S4"/>
<dbReference type="BioGRID" id="23241">
    <property type="interactions" value="66"/>
</dbReference>
<dbReference type="FunCoup" id="Q9M9S4">
    <property type="interactions" value="450"/>
</dbReference>
<dbReference type="IntAct" id="Q9M9S4">
    <property type="interactions" value="73"/>
</dbReference>
<dbReference type="STRING" id="3702.Q9M9S4"/>
<dbReference type="GlyGen" id="Q9M9S4">
    <property type="glycosylation" value="8 sites"/>
</dbReference>
<dbReference type="iPTMnet" id="Q9M9S4"/>
<dbReference type="PaxDb" id="3702-AT1G14390.1"/>
<dbReference type="ProteomicsDB" id="242520"/>
<dbReference type="EnsemblPlants" id="AT1G14390.1">
    <property type="protein sequence ID" value="AT1G14390.1"/>
    <property type="gene ID" value="AT1G14390"/>
</dbReference>
<dbReference type="GeneID" id="838001"/>
<dbReference type="Gramene" id="AT1G14390.1">
    <property type="protein sequence ID" value="AT1G14390.1"/>
    <property type="gene ID" value="AT1G14390"/>
</dbReference>
<dbReference type="KEGG" id="ath:AT1G14390"/>
<dbReference type="Araport" id="AT1G14390"/>
<dbReference type="TAIR" id="AT1G14390"/>
<dbReference type="eggNOG" id="ENOG502QTFC">
    <property type="taxonomic scope" value="Eukaryota"/>
</dbReference>
<dbReference type="HOGENOM" id="CLU_000288_108_0_1"/>
<dbReference type="InParanoid" id="Q9M9S4"/>
<dbReference type="OMA" id="EPFEANN"/>
<dbReference type="PhylomeDB" id="Q9M9S4"/>
<dbReference type="PRO" id="PR:Q9M9S4"/>
<dbReference type="Proteomes" id="UP000006548">
    <property type="component" value="Chromosome 1"/>
</dbReference>
<dbReference type="ExpressionAtlas" id="Q9M9S4">
    <property type="expression patterns" value="baseline and differential"/>
</dbReference>
<dbReference type="GO" id="GO:0016020">
    <property type="term" value="C:membrane"/>
    <property type="evidence" value="ECO:0007669"/>
    <property type="project" value="UniProtKB-SubCell"/>
</dbReference>
<dbReference type="GO" id="GO:0005524">
    <property type="term" value="F:ATP binding"/>
    <property type="evidence" value="ECO:0007669"/>
    <property type="project" value="UniProtKB-KW"/>
</dbReference>
<dbReference type="GO" id="GO:0106310">
    <property type="term" value="F:protein serine kinase activity"/>
    <property type="evidence" value="ECO:0007669"/>
    <property type="project" value="RHEA"/>
</dbReference>
<dbReference type="GO" id="GO:0004674">
    <property type="term" value="F:protein serine/threonine kinase activity"/>
    <property type="evidence" value="ECO:0007669"/>
    <property type="project" value="UniProtKB-KW"/>
</dbReference>
<dbReference type="FunFam" id="3.80.10.10:FF:000041">
    <property type="entry name" value="LRR receptor-like serine/threonine-protein kinase ERECTA"/>
    <property type="match status" value="1"/>
</dbReference>
<dbReference type="FunFam" id="3.80.10.10:FF:000673">
    <property type="entry name" value="Probable LRR receptor-like serine/threonine-protein kinase At2g02780"/>
    <property type="match status" value="1"/>
</dbReference>
<dbReference type="FunFam" id="1.10.510.10:FF:000431">
    <property type="entry name" value="Putative inactive leucine-rich repeat receptor-like protein kinase"/>
    <property type="match status" value="1"/>
</dbReference>
<dbReference type="Gene3D" id="3.30.200.20">
    <property type="entry name" value="Phosphorylase Kinase, domain 1"/>
    <property type="match status" value="1"/>
</dbReference>
<dbReference type="Gene3D" id="3.80.10.10">
    <property type="entry name" value="Ribonuclease Inhibitor"/>
    <property type="match status" value="2"/>
</dbReference>
<dbReference type="Gene3D" id="1.10.510.10">
    <property type="entry name" value="Transferase(Phosphotransferase) domain 1"/>
    <property type="match status" value="2"/>
</dbReference>
<dbReference type="InterPro" id="IPR011009">
    <property type="entry name" value="Kinase-like_dom_sf"/>
</dbReference>
<dbReference type="InterPro" id="IPR001611">
    <property type="entry name" value="Leu-rich_rpt"/>
</dbReference>
<dbReference type="InterPro" id="IPR032675">
    <property type="entry name" value="LRR_dom_sf"/>
</dbReference>
<dbReference type="InterPro" id="IPR051824">
    <property type="entry name" value="LRR_Rcpt-Like_S/T_Kinase"/>
</dbReference>
<dbReference type="InterPro" id="IPR000719">
    <property type="entry name" value="Prot_kinase_dom"/>
</dbReference>
<dbReference type="InterPro" id="IPR001245">
    <property type="entry name" value="Ser-Thr/Tyr_kinase_cat_dom"/>
</dbReference>
<dbReference type="PANTHER" id="PTHR48006">
    <property type="entry name" value="LEUCINE-RICH REPEAT-CONTAINING PROTEIN DDB_G0281931-RELATED"/>
    <property type="match status" value="1"/>
</dbReference>
<dbReference type="PANTHER" id="PTHR48006:SF73">
    <property type="entry name" value="PROTEIN KINASE DOMAIN-CONTAINING PROTEIN"/>
    <property type="match status" value="1"/>
</dbReference>
<dbReference type="Pfam" id="PF00560">
    <property type="entry name" value="LRR_1"/>
    <property type="match status" value="3"/>
</dbReference>
<dbReference type="Pfam" id="PF07714">
    <property type="entry name" value="PK_Tyr_Ser-Thr"/>
    <property type="match status" value="1"/>
</dbReference>
<dbReference type="SUPFAM" id="SSF52058">
    <property type="entry name" value="L domain-like"/>
    <property type="match status" value="1"/>
</dbReference>
<dbReference type="SUPFAM" id="SSF56112">
    <property type="entry name" value="Protein kinase-like (PK-like)"/>
    <property type="match status" value="1"/>
</dbReference>
<dbReference type="PROSITE" id="PS50011">
    <property type="entry name" value="PROTEIN_KINASE_DOM"/>
    <property type="match status" value="1"/>
</dbReference>
<name>Y1143_ARATH</name>
<keyword id="KW-0067">ATP-binding</keyword>
<keyword id="KW-0325">Glycoprotein</keyword>
<keyword id="KW-0418">Kinase</keyword>
<keyword id="KW-0433">Leucine-rich repeat</keyword>
<keyword id="KW-0472">Membrane</keyword>
<keyword id="KW-0547">Nucleotide-binding</keyword>
<keyword id="KW-0675">Receptor</keyword>
<keyword id="KW-1185">Reference proteome</keyword>
<keyword id="KW-0677">Repeat</keyword>
<keyword id="KW-0723">Serine/threonine-protein kinase</keyword>
<keyword id="KW-0732">Signal</keyword>
<keyword id="KW-0808">Transferase</keyword>
<keyword id="KW-0812">Transmembrane</keyword>
<keyword id="KW-1133">Transmembrane helix</keyword>
<accession>Q9M9S4</accession>
<accession>F4HUK3</accession>
<reference key="1">
    <citation type="journal article" date="2000" name="Nature">
        <title>Sequence and analysis of chromosome 1 of the plant Arabidopsis thaliana.</title>
        <authorList>
            <person name="Theologis A."/>
            <person name="Ecker J.R."/>
            <person name="Palm C.J."/>
            <person name="Federspiel N.A."/>
            <person name="Kaul S."/>
            <person name="White O."/>
            <person name="Alonso J."/>
            <person name="Altafi H."/>
            <person name="Araujo R."/>
            <person name="Bowman C.L."/>
            <person name="Brooks S.Y."/>
            <person name="Buehler E."/>
            <person name="Chan A."/>
            <person name="Chao Q."/>
            <person name="Chen H."/>
            <person name="Cheuk R.F."/>
            <person name="Chin C.W."/>
            <person name="Chung M.K."/>
            <person name="Conn L."/>
            <person name="Conway A.B."/>
            <person name="Conway A.R."/>
            <person name="Creasy T.H."/>
            <person name="Dewar K."/>
            <person name="Dunn P."/>
            <person name="Etgu P."/>
            <person name="Feldblyum T.V."/>
            <person name="Feng J.-D."/>
            <person name="Fong B."/>
            <person name="Fujii C.Y."/>
            <person name="Gill J.E."/>
            <person name="Goldsmith A.D."/>
            <person name="Haas B."/>
            <person name="Hansen N.F."/>
            <person name="Hughes B."/>
            <person name="Huizar L."/>
            <person name="Hunter J.L."/>
            <person name="Jenkins J."/>
            <person name="Johnson-Hopson C."/>
            <person name="Khan S."/>
            <person name="Khaykin E."/>
            <person name="Kim C.J."/>
            <person name="Koo H.L."/>
            <person name="Kremenetskaia I."/>
            <person name="Kurtz D.B."/>
            <person name="Kwan A."/>
            <person name="Lam B."/>
            <person name="Langin-Hooper S."/>
            <person name="Lee A."/>
            <person name="Lee J.M."/>
            <person name="Lenz C.A."/>
            <person name="Li J.H."/>
            <person name="Li Y.-P."/>
            <person name="Lin X."/>
            <person name="Liu S.X."/>
            <person name="Liu Z.A."/>
            <person name="Luros J.S."/>
            <person name="Maiti R."/>
            <person name="Marziali A."/>
            <person name="Militscher J."/>
            <person name="Miranda M."/>
            <person name="Nguyen M."/>
            <person name="Nierman W.C."/>
            <person name="Osborne B.I."/>
            <person name="Pai G."/>
            <person name="Peterson J."/>
            <person name="Pham P.K."/>
            <person name="Rizzo M."/>
            <person name="Rooney T."/>
            <person name="Rowley D."/>
            <person name="Sakano H."/>
            <person name="Salzberg S.L."/>
            <person name="Schwartz J.R."/>
            <person name="Shinn P."/>
            <person name="Southwick A.M."/>
            <person name="Sun H."/>
            <person name="Tallon L.J."/>
            <person name="Tambunga G."/>
            <person name="Toriumi M.J."/>
            <person name="Town C.D."/>
            <person name="Utterback T."/>
            <person name="Van Aken S."/>
            <person name="Vaysberg M."/>
            <person name="Vysotskaia V.S."/>
            <person name="Walker M."/>
            <person name="Wu D."/>
            <person name="Yu G."/>
            <person name="Fraser C.M."/>
            <person name="Venter J.C."/>
            <person name="Davis R.W."/>
        </authorList>
    </citation>
    <scope>NUCLEOTIDE SEQUENCE [LARGE SCALE GENOMIC DNA]</scope>
    <source>
        <strain>cv. Columbia</strain>
    </source>
</reference>
<reference key="2">
    <citation type="journal article" date="2017" name="Plant J.">
        <title>Araport11: a complete reannotation of the Arabidopsis thaliana reference genome.</title>
        <authorList>
            <person name="Cheng C.Y."/>
            <person name="Krishnakumar V."/>
            <person name="Chan A.P."/>
            <person name="Thibaud-Nissen F."/>
            <person name="Schobel S."/>
            <person name="Town C.D."/>
        </authorList>
    </citation>
    <scope>GENOME REANNOTATION</scope>
    <source>
        <strain>cv. Columbia</strain>
    </source>
</reference>
<reference key="3">
    <citation type="journal article" date="2010" name="BMC Genomics">
        <title>Genome-wide cloning and sequence analysis of leucine-rich repeat receptor-like protein kinase genes in Arabidopsis thaliana.</title>
        <authorList>
            <person name="Gou X."/>
            <person name="He K."/>
            <person name="Yang H."/>
            <person name="Yuan T."/>
            <person name="Lin H."/>
            <person name="Clouse S.D."/>
            <person name="Li J."/>
        </authorList>
    </citation>
    <scope>NUCLEOTIDE SEQUENCE [LARGE SCALE MRNA]</scope>
    <source>
        <strain>cv. Columbia</strain>
    </source>
</reference>
<organism>
    <name type="scientific">Arabidopsis thaliana</name>
    <name type="common">Mouse-ear cress</name>
    <dbReference type="NCBI Taxonomy" id="3702"/>
    <lineage>
        <taxon>Eukaryota</taxon>
        <taxon>Viridiplantae</taxon>
        <taxon>Streptophyta</taxon>
        <taxon>Embryophyta</taxon>
        <taxon>Tracheophyta</taxon>
        <taxon>Spermatophyta</taxon>
        <taxon>Magnoliopsida</taxon>
        <taxon>eudicotyledons</taxon>
        <taxon>Gunneridae</taxon>
        <taxon>Pentapetalae</taxon>
        <taxon>rosids</taxon>
        <taxon>malvids</taxon>
        <taxon>Brassicales</taxon>
        <taxon>Brassicaceae</taxon>
        <taxon>Camelineae</taxon>
        <taxon>Arabidopsis</taxon>
    </lineage>
</organism>
<feature type="signal peptide" evidence="1">
    <location>
        <begin position="1"/>
        <end position="27"/>
    </location>
</feature>
<feature type="chain" id="PRO_0000387525" description="Probable LRR receptor-like serine/threonine-protein kinase At1g14390">
    <location>
        <begin position="28"/>
        <end position="728"/>
    </location>
</feature>
<feature type="topological domain" description="Extracellular" evidence="1">
    <location>
        <begin position="28"/>
        <end position="356"/>
    </location>
</feature>
<feature type="transmembrane region" description="Helical" evidence="1">
    <location>
        <begin position="357"/>
        <end position="377"/>
    </location>
</feature>
<feature type="topological domain" description="Cytoplasmic" evidence="1">
    <location>
        <begin position="378"/>
        <end position="728"/>
    </location>
</feature>
<feature type="repeat" description="LRR 1">
    <location>
        <begin position="74"/>
        <end position="96"/>
    </location>
</feature>
<feature type="repeat" description="LRR 2">
    <location>
        <begin position="106"/>
        <end position="130"/>
    </location>
</feature>
<feature type="repeat" description="LRR 3">
    <location>
        <begin position="131"/>
        <end position="155"/>
    </location>
</feature>
<feature type="repeat" description="LRR 4">
    <location>
        <begin position="157"/>
        <end position="178"/>
    </location>
</feature>
<feature type="repeat" description="LRR 5">
    <location>
        <begin position="179"/>
        <end position="202"/>
    </location>
</feature>
<feature type="repeat" description="LRR 6">
    <location>
        <begin position="204"/>
        <end position="224"/>
    </location>
</feature>
<feature type="repeat" description="LRR 7">
    <location>
        <begin position="225"/>
        <end position="248"/>
    </location>
</feature>
<feature type="repeat" description="LRR 8">
    <location>
        <begin position="249"/>
        <end position="272"/>
    </location>
</feature>
<feature type="repeat" description="LRR 9">
    <location>
        <begin position="274"/>
        <end position="295"/>
    </location>
</feature>
<feature type="domain" description="Protein kinase" evidence="2">
    <location>
        <begin position="421"/>
        <end position="709"/>
    </location>
</feature>
<feature type="glycosylation site" description="N-linked (GlcNAc...) asparagine" evidence="1">
    <location>
        <position position="55"/>
    </location>
</feature>
<feature type="glycosylation site" description="N-linked (GlcNAc...) asparagine" evidence="1">
    <location>
        <position position="85"/>
    </location>
</feature>
<feature type="glycosylation site" description="N-linked (GlcNAc...) asparagine" evidence="1">
    <location>
        <position position="138"/>
    </location>
</feature>
<feature type="glycosylation site" description="N-linked (GlcNAc...) asparagine" evidence="1">
    <location>
        <position position="169"/>
    </location>
</feature>
<feature type="glycosylation site" description="N-linked (GlcNAc...) asparagine" evidence="1">
    <location>
        <position position="210"/>
    </location>
</feature>
<feature type="glycosylation site" description="N-linked (GlcNAc...) asparagine" evidence="1">
    <location>
        <position position="253"/>
    </location>
</feature>
<feature type="glycosylation site" description="N-linked (GlcNAc...) asparagine" evidence="1">
    <location>
        <position position="267"/>
    </location>
</feature>
<proteinExistence type="evidence at protein level"/>
<gene>
    <name type="ordered locus">At1g14390</name>
    <name type="ORF">F14L17.16</name>
</gene>
<protein>
    <recommendedName>
        <fullName>Probable LRR receptor-like serine/threonine-protein kinase At1g14390</fullName>
        <ecNumber>2.7.11.1</ecNumber>
    </recommendedName>
</protein>
<sequence>MHSSSKSQAFSLTFLLFLFLLPSVSESQLISSESRTLLEIQKHLQYPPTLRSWSNWTNFCYLPSSPSFKILCFNGHVTELTVTGNRTVKLPGRFSSDSLFTVLTKLSNLKTLSLVSLGISGPLPSQIIRLSSSLQSLNLSSNFISGNIPKEISSLKNLRSLVLANNLFNGSVPDLRGLSNLQELNLGGNKLGPEVVPSLASNLITISLKNNSFGSKIPEQIKKLNKLQSLDLSSNKFTGSIPRFLLSLPSLQNLSLAQNLLSGSLPNSSLCNSKLRILDVSRNLLTGKLPSCFSSKKQTVLLFTFNCLSINGSPSAKYQRPVTFCENEAKQAVAAVKSDTKDKERKEEDTGIELGLVIGIIIGVILVSAVLAGLVLVRMRKSRSKEEPLEANNVDQVTVCSNTTRSTTSKTVPDLRRVPQTMRSAVIGLSPYRVFSLEELEEATNNFDAENLCGEQLYKGCLREGIAVTVRCIKLKQKNSTQNLAQQMEVLSKLRHMHLVSVLGHCIGTYQDHHPYAGSTIFIVQEYISNGSLRDYLTDWRKKEVLKWPQRMSIAIGVARGIQFLHTGVAPGIFGNNLEIENVLLDETLTVKLSGYSIPLPSKVGAESPSNEDGEKEDVYQFGVILIQIITGKVIAAASSELGSLKLQLENSLRDEPSVLRSLADPCVRGTYAYESLRTTVEFAINCLCEDQRKRPSIEDVVWNLQYTIQVQQGWTSSENLGLGGSEL</sequence>
<comment type="catalytic activity">
    <reaction>
        <text>L-seryl-[protein] + ATP = O-phospho-L-seryl-[protein] + ADP + H(+)</text>
        <dbReference type="Rhea" id="RHEA:17989"/>
        <dbReference type="Rhea" id="RHEA-COMP:9863"/>
        <dbReference type="Rhea" id="RHEA-COMP:11604"/>
        <dbReference type="ChEBI" id="CHEBI:15378"/>
        <dbReference type="ChEBI" id="CHEBI:29999"/>
        <dbReference type="ChEBI" id="CHEBI:30616"/>
        <dbReference type="ChEBI" id="CHEBI:83421"/>
        <dbReference type="ChEBI" id="CHEBI:456216"/>
        <dbReference type="EC" id="2.7.11.1"/>
    </reaction>
</comment>
<comment type="catalytic activity">
    <reaction>
        <text>L-threonyl-[protein] + ATP = O-phospho-L-threonyl-[protein] + ADP + H(+)</text>
        <dbReference type="Rhea" id="RHEA:46608"/>
        <dbReference type="Rhea" id="RHEA-COMP:11060"/>
        <dbReference type="Rhea" id="RHEA-COMP:11605"/>
        <dbReference type="ChEBI" id="CHEBI:15378"/>
        <dbReference type="ChEBI" id="CHEBI:30013"/>
        <dbReference type="ChEBI" id="CHEBI:30616"/>
        <dbReference type="ChEBI" id="CHEBI:61977"/>
        <dbReference type="ChEBI" id="CHEBI:456216"/>
        <dbReference type="EC" id="2.7.11.1"/>
    </reaction>
</comment>
<comment type="interaction">
    <interactant intactId="EBI-16954682">
        <id>Q9M9S4</id>
    </interactant>
    <interactant intactId="EBI-20651385">
        <id>Q9SH71</id>
        <label>At1g64210</label>
    </interactant>
    <organismsDiffer>false</organismsDiffer>
    <experiments>2</experiments>
</comment>
<comment type="interaction">
    <interactant intactId="EBI-16954682">
        <id>Q9M9S4</id>
    </interactant>
    <interactant intactId="EBI-20652666">
        <id>C0LGJ1</id>
        <label>At1g74360</label>
    </interactant>
    <organismsDiffer>false</organismsDiffer>
    <experiments>2</experiments>
</comment>
<comment type="interaction">
    <interactant intactId="EBI-16954682">
        <id>Q9M9S4</id>
    </interactant>
    <interactant intactId="EBI-16955712">
        <id>Q9C7T7</id>
        <label>CEPR2</label>
    </interactant>
    <organismsDiffer>false</organismsDiffer>
    <experiments>2</experiments>
</comment>
<comment type="interaction">
    <interactant intactId="EBI-16954682">
        <id>Q9M9S4</id>
    </interactant>
    <interactant intactId="EBI-17121474">
        <id>Q93ZS4</id>
        <label>NIK3</label>
    </interactant>
    <organismsDiffer>false</organismsDiffer>
    <experiments>2</experiments>
</comment>
<comment type="interaction">
    <interactant intactId="EBI-16954682">
        <id>Q9M9S4</id>
    </interactant>
    <interactant intactId="EBI-20652612">
        <id>Q9FZ59</id>
        <label>PEPR2</label>
    </interactant>
    <organismsDiffer>false</organismsDiffer>
    <experiments>2</experiments>
</comment>
<comment type="interaction">
    <interactant intactId="EBI-16954682">
        <id>Q9M9S4</id>
    </interactant>
    <interactant intactId="EBI-20652553">
        <id>Q9FXF2-2</id>
        <label>RKF1</label>
    </interactant>
    <organismsDiffer>false</organismsDiffer>
    <experiments>2</experiments>
</comment>
<comment type="interaction">
    <interactant intactId="EBI-16954682">
        <id>Q9M9S4</id>
    </interactant>
    <interactant intactId="EBI-11420624">
        <id>P47735</id>
        <label>RLK5</label>
    </interactant>
    <organismsDiffer>false</organismsDiffer>
    <experiments>2</experiments>
</comment>
<comment type="interaction">
    <interactant intactId="EBI-16954682">
        <id>Q9M9S4</id>
    </interactant>
    <interactant intactId="EBI-2023970">
        <id>P43298</id>
        <label>TMK1</label>
    </interactant>
    <organismsDiffer>false</organismsDiffer>
    <experiments>2</experiments>
</comment>
<comment type="interaction">
    <interactant intactId="EBI-16954682">
        <id>Q9M9S4</id>
    </interactant>
    <interactant intactId="EBI-16896864">
        <id>Q9SIT1</id>
        <label>TMK3</label>
    </interactant>
    <organismsDiffer>false</organismsDiffer>
    <experiments>2</experiments>
</comment>
<comment type="subcellular location">
    <subcellularLocation>
        <location evidence="3">Membrane</location>
        <topology evidence="3">Single-pass type I membrane protein</topology>
    </subcellularLocation>
</comment>
<comment type="similarity">
    <text evidence="2">Belongs to the protein kinase superfamily. Ser/Thr protein kinase family.</text>
</comment>